<feature type="chain" id="PRO_0000071304" description="Uncharacterized protein R651">
    <location>
        <begin position="1"/>
        <end position="493"/>
    </location>
</feature>
<feature type="region of interest" description="Disordered" evidence="1">
    <location>
        <begin position="316"/>
        <end position="403"/>
    </location>
</feature>
<feature type="compositionally biased region" description="Low complexity" evidence="1">
    <location>
        <begin position="338"/>
        <end position="353"/>
    </location>
</feature>
<feature type="compositionally biased region" description="Polar residues" evidence="1">
    <location>
        <begin position="371"/>
        <end position="398"/>
    </location>
</feature>
<gene>
    <name type="ordered locus">MIMI_R651</name>
</gene>
<dbReference type="EMBL" id="AY653733">
    <property type="protein sequence ID" value="AAV50912.1"/>
    <property type="molecule type" value="Genomic_DNA"/>
</dbReference>
<dbReference type="KEGG" id="vg:9925296"/>
<dbReference type="OrthoDB" id="21715at10239"/>
<dbReference type="Proteomes" id="UP000001134">
    <property type="component" value="Genome"/>
</dbReference>
<dbReference type="InterPro" id="IPR043908">
    <property type="entry name" value="DUF5769"/>
</dbReference>
<dbReference type="Pfam" id="PF19073">
    <property type="entry name" value="DUF5769"/>
    <property type="match status" value="1"/>
</dbReference>
<keyword id="KW-1185">Reference proteome</keyword>
<organismHost>
    <name type="scientific">Acanthamoeba polyphaga</name>
    <name type="common">Amoeba</name>
    <dbReference type="NCBI Taxonomy" id="5757"/>
</organismHost>
<accession>Q5UR06</accession>
<name>YR651_MIMIV</name>
<reference key="1">
    <citation type="journal article" date="2004" name="Science">
        <title>The 1.2-megabase genome sequence of Mimivirus.</title>
        <authorList>
            <person name="Raoult D."/>
            <person name="Audic S."/>
            <person name="Robert C."/>
            <person name="Abergel C."/>
            <person name="Renesto P."/>
            <person name="Ogata H."/>
            <person name="La Scola B."/>
            <person name="Susan M."/>
            <person name="Claverie J.-M."/>
        </authorList>
    </citation>
    <scope>NUCLEOTIDE SEQUENCE [LARGE SCALE GENOMIC DNA]</scope>
    <source>
        <strain>Rowbotham-Bradford</strain>
    </source>
</reference>
<comment type="similarity">
    <text evidence="2">Belongs to the mimivirus R69 family.</text>
</comment>
<proteinExistence type="inferred from homology"/>
<evidence type="ECO:0000256" key="1">
    <source>
        <dbReference type="SAM" id="MobiDB-lite"/>
    </source>
</evidence>
<evidence type="ECO:0000305" key="2"/>
<protein>
    <recommendedName>
        <fullName>Uncharacterized protein R651</fullName>
    </recommendedName>
</protein>
<sequence>MESGEHDSETMYEPYIPPIINKVNTILRSHCRQCVLDLIFKKIKEENVHCYGDYVRYMLIGYDSNRIRVRFKSEFQATFFRKQLEIYLSVKNYGDYEDSNCSTMRVRPKYSNKYFRNFILSNEYIMKLFEQIHQSRTSYLLNKLRKQFKKTRFYLEFYYETSLNYTNYEYIPVNCDFDVDTLMVDKQIYEKPNPEDFIVINPKCKVENVINNINNMQFIILTKNGSPLIQHYSEDIVTGNYDDDYYKFYLDELMGRSHCIDRYSASGKRILSRKEIMEDEGWVCINLPCPNQNCVLFENTIGICCDNDETVSSNSLNMVNFGPDDKNSATNPTHLSKESQNNSESNSESITESPLNSFIQRSGNREDSEISQDNDTVQIDKSTSSDSVHNYFDNSVDNSVHDSVHDSVDTIGQTRRDNASTNRPLYSEYDNFLRTTMDTIKTVYQKKIFDGDSDKIKHSRFSVNQIYDRVEYTDNHDCHDHHDSEISTNNIFG</sequence>
<organism>
    <name type="scientific">Acanthamoeba polyphaga mimivirus</name>
    <name type="common">APMV</name>
    <dbReference type="NCBI Taxonomy" id="212035"/>
    <lineage>
        <taxon>Viruses</taxon>
        <taxon>Varidnaviria</taxon>
        <taxon>Bamfordvirae</taxon>
        <taxon>Nucleocytoviricota</taxon>
        <taxon>Megaviricetes</taxon>
        <taxon>Imitervirales</taxon>
        <taxon>Mimiviridae</taxon>
        <taxon>Megamimivirinae</taxon>
        <taxon>Mimivirus</taxon>
        <taxon>Mimivirus bradfordmassiliense</taxon>
    </lineage>
</organism>